<gene>
    <name evidence="4" type="primary">CKS1</name>
    <name evidence="6" type="ordered locus">YBR135W</name>
    <name type="ORF">YBR1011</name>
</gene>
<accession>P20486</accession>
<accession>D6VQD1</accession>
<comment type="function">
    <text evidence="3">Binds to the catalytic subunit of the cyclin dependent kinase (CDC28) and is essential for its biological function.</text>
</comment>
<comment type="subunit">
    <text evidence="3">Forms a stable but non-covalent complex with the CDC28 protein and with a cyclin.</text>
</comment>
<comment type="interaction">
    <interactant intactId="EBI-4746">
        <id>P20486</id>
    </interactant>
    <interactant intactId="EBI-4253">
        <id>P00546</id>
        <label>CDC28</label>
    </interactant>
    <organismsDiffer>false</organismsDiffer>
    <experiments>9</experiments>
</comment>
<comment type="interaction">
    <interactant intactId="EBI-4746">
        <id>P20486</id>
    </interactant>
    <interactant intactId="EBI-4508">
        <id>P24868</id>
        <label>CLB1</label>
    </interactant>
    <organismsDiffer>false</organismsDiffer>
    <experiments>3</experiments>
</comment>
<comment type="interaction">
    <interactant intactId="EBI-4746">
        <id>P20486</id>
    </interactant>
    <interactant intactId="EBI-4515">
        <id>P24869</id>
        <label>CLB2</label>
    </interactant>
    <organismsDiffer>false</organismsDiffer>
    <experiments>3</experiments>
</comment>
<comment type="interaction">
    <interactant intactId="EBI-4746">
        <id>P20486</id>
    </interactant>
    <interactant intactId="EBI-4522">
        <id>P24870</id>
        <label>CLB3</label>
    </interactant>
    <organismsDiffer>false</organismsDiffer>
    <experiments>4</experiments>
</comment>
<comment type="miscellaneous">
    <text evidence="2">Present with 8780 molecules/cell in log phase SD medium.</text>
</comment>
<comment type="similarity">
    <text evidence="5">Belongs to the CKS family.</text>
</comment>
<sequence>MYHHYHAFQGRKLTDQERARVLEFQDSIHYSPRYSDDNYEYRHVMLPKAMLKVIPSDYFNSEVGTLRILTEDEWRGLGITQSLGWEHYECHAPEPHILLFKRPLNYEAELRAATAAAQQQQQQQQQQQQQQQQHQTQSISNDMQVPPQIS</sequence>
<keyword id="KW-0002">3D-structure</keyword>
<keyword id="KW-0131">Cell cycle</keyword>
<keyword id="KW-0132">Cell division</keyword>
<keyword id="KW-1185">Reference proteome</keyword>
<organism>
    <name type="scientific">Saccharomyces cerevisiae (strain ATCC 204508 / S288c)</name>
    <name type="common">Baker's yeast</name>
    <dbReference type="NCBI Taxonomy" id="559292"/>
    <lineage>
        <taxon>Eukaryota</taxon>
        <taxon>Fungi</taxon>
        <taxon>Dikarya</taxon>
        <taxon>Ascomycota</taxon>
        <taxon>Saccharomycotina</taxon>
        <taxon>Saccharomycetes</taxon>
        <taxon>Saccharomycetales</taxon>
        <taxon>Saccharomycetaceae</taxon>
        <taxon>Saccharomyces</taxon>
    </lineage>
</organism>
<protein>
    <recommendedName>
        <fullName>Cyclin-dependent kinases regulatory subunit</fullName>
    </recommendedName>
    <alternativeName>
        <fullName>Cell division control protein CKS1</fullName>
    </alternativeName>
</protein>
<proteinExistence type="evidence at protein level"/>
<dbReference type="EMBL" id="M26033">
    <property type="protein sequence ID" value="AAA34879.1"/>
    <property type="molecule type" value="Genomic_DNA"/>
</dbReference>
<dbReference type="EMBL" id="X75891">
    <property type="protein sequence ID" value="CAA53493.1"/>
    <property type="molecule type" value="Genomic_DNA"/>
</dbReference>
<dbReference type="EMBL" id="Z36004">
    <property type="protein sequence ID" value="CAA85092.1"/>
    <property type="molecule type" value="Genomic_DNA"/>
</dbReference>
<dbReference type="EMBL" id="AY558186">
    <property type="protein sequence ID" value="AAS56512.1"/>
    <property type="molecule type" value="Genomic_DNA"/>
</dbReference>
<dbReference type="EMBL" id="D11088">
    <property type="protein sequence ID" value="BAA01859.1"/>
    <property type="molecule type" value="Genomic_DNA"/>
</dbReference>
<dbReference type="EMBL" id="BK006936">
    <property type="protein sequence ID" value="DAA07251.1"/>
    <property type="molecule type" value="Genomic_DNA"/>
</dbReference>
<dbReference type="PIR" id="A32793">
    <property type="entry name" value="OKBYS1"/>
</dbReference>
<dbReference type="RefSeq" id="NP_009693.3">
    <property type="nucleotide sequence ID" value="NM_001178483.3"/>
</dbReference>
<dbReference type="PDB" id="1QB3">
    <property type="method" value="X-ray"/>
    <property type="resolution" value="3.00 A"/>
    <property type="chains" value="A/B/C=1-150"/>
</dbReference>
<dbReference type="PDB" id="3QY2">
    <property type="method" value="X-ray"/>
    <property type="resolution" value="2.59 A"/>
    <property type="chains" value="A/B=1-117"/>
</dbReference>
<dbReference type="PDB" id="4LPA">
    <property type="method" value="X-ray"/>
    <property type="resolution" value="2.90 A"/>
    <property type="chains" value="A/B/C/D=1-113"/>
</dbReference>
<dbReference type="PDBsum" id="1QB3"/>
<dbReference type="PDBsum" id="3QY2"/>
<dbReference type="PDBsum" id="4LPA"/>
<dbReference type="SMR" id="P20486"/>
<dbReference type="BioGRID" id="32835">
    <property type="interactions" value="646"/>
</dbReference>
<dbReference type="ComplexPortal" id="CPX-1699">
    <property type="entry name" value="CLN1-CDC28 kinase complex"/>
</dbReference>
<dbReference type="ComplexPortal" id="CPX-1700">
    <property type="entry name" value="CLN3-CDC28 kinase complex"/>
</dbReference>
<dbReference type="ComplexPortal" id="CPX-342">
    <property type="entry name" value="CLN2-CDC28 kinase complex"/>
</dbReference>
<dbReference type="DIP" id="DIP-1262N"/>
<dbReference type="ELM" id="P20486"/>
<dbReference type="FunCoup" id="P20486">
    <property type="interactions" value="775"/>
</dbReference>
<dbReference type="IntAct" id="P20486">
    <property type="interactions" value="26"/>
</dbReference>
<dbReference type="MINT" id="P20486"/>
<dbReference type="STRING" id="4932.YBR135W"/>
<dbReference type="PaxDb" id="4932-YBR135W"/>
<dbReference type="PeptideAtlas" id="P20486"/>
<dbReference type="TopDownProteomics" id="P20486"/>
<dbReference type="EnsemblFungi" id="YBR135W_mRNA">
    <property type="protein sequence ID" value="YBR135W"/>
    <property type="gene ID" value="YBR135W"/>
</dbReference>
<dbReference type="GeneID" id="852432"/>
<dbReference type="KEGG" id="sce:YBR135W"/>
<dbReference type="AGR" id="SGD:S000000339"/>
<dbReference type="SGD" id="S000000339">
    <property type="gene designation" value="CKS1"/>
</dbReference>
<dbReference type="VEuPathDB" id="FungiDB:YBR135W"/>
<dbReference type="eggNOG" id="KOG3484">
    <property type="taxonomic scope" value="Eukaryota"/>
</dbReference>
<dbReference type="GeneTree" id="ENSGT00950000182971"/>
<dbReference type="HOGENOM" id="CLU_140546_1_0_1"/>
<dbReference type="InParanoid" id="P20486"/>
<dbReference type="OMA" id="RPINYGQ"/>
<dbReference type="OrthoDB" id="440676at2759"/>
<dbReference type="BioCyc" id="YEAST:G3O-29089-MONOMER"/>
<dbReference type="BioGRID-ORCS" id="852432">
    <property type="hits" value="6 hits in 10 CRISPR screens"/>
</dbReference>
<dbReference type="EvolutionaryTrace" id="P20486"/>
<dbReference type="PRO" id="PR:P20486"/>
<dbReference type="Proteomes" id="UP000002311">
    <property type="component" value="Chromosome II"/>
</dbReference>
<dbReference type="RNAct" id="P20486">
    <property type="molecule type" value="protein"/>
</dbReference>
<dbReference type="GO" id="GO:0000307">
    <property type="term" value="C:cyclin-dependent protein kinase holoenzyme complex"/>
    <property type="evidence" value="ECO:0000314"/>
    <property type="project" value="SGD"/>
</dbReference>
<dbReference type="GO" id="GO:0005737">
    <property type="term" value="C:cytoplasm"/>
    <property type="evidence" value="ECO:0007005"/>
    <property type="project" value="SGD"/>
</dbReference>
<dbReference type="GO" id="GO:0005634">
    <property type="term" value="C:nucleus"/>
    <property type="evidence" value="ECO:0007005"/>
    <property type="project" value="SGD"/>
</dbReference>
<dbReference type="GO" id="GO:0019005">
    <property type="term" value="C:SCF ubiquitin ligase complex"/>
    <property type="evidence" value="ECO:0000318"/>
    <property type="project" value="GO_Central"/>
</dbReference>
<dbReference type="GO" id="GO:0061575">
    <property type="term" value="F:cyclin-dependent protein serine/threonine kinase activator activity"/>
    <property type="evidence" value="ECO:0000318"/>
    <property type="project" value="GO_Central"/>
</dbReference>
<dbReference type="GO" id="GO:0042393">
    <property type="term" value="F:histone binding"/>
    <property type="evidence" value="ECO:0000314"/>
    <property type="project" value="SGD"/>
</dbReference>
<dbReference type="GO" id="GO:0030295">
    <property type="term" value="F:protein kinase activator activity"/>
    <property type="evidence" value="ECO:0000314"/>
    <property type="project" value="SGD"/>
</dbReference>
<dbReference type="GO" id="GO:0019901">
    <property type="term" value="F:protein kinase binding"/>
    <property type="evidence" value="ECO:0000318"/>
    <property type="project" value="GO_Central"/>
</dbReference>
<dbReference type="GO" id="GO:0043130">
    <property type="term" value="F:ubiquitin binding"/>
    <property type="evidence" value="ECO:0000314"/>
    <property type="project" value="SGD"/>
</dbReference>
<dbReference type="GO" id="GO:0051301">
    <property type="term" value="P:cell division"/>
    <property type="evidence" value="ECO:0007669"/>
    <property type="project" value="UniProtKB-KW"/>
</dbReference>
<dbReference type="GO" id="GO:0045944">
    <property type="term" value="P:positive regulation of transcription by RNA polymerase II"/>
    <property type="evidence" value="ECO:0000314"/>
    <property type="project" value="SGD"/>
</dbReference>
<dbReference type="GO" id="GO:1902806">
    <property type="term" value="P:regulation of cell cycle G1/S phase transition"/>
    <property type="evidence" value="ECO:0000303"/>
    <property type="project" value="ComplexPortal"/>
</dbReference>
<dbReference type="GO" id="GO:0007346">
    <property type="term" value="P:regulation of mitotic cell cycle"/>
    <property type="evidence" value="ECO:0000315"/>
    <property type="project" value="SGD"/>
</dbReference>
<dbReference type="GO" id="GO:0006357">
    <property type="term" value="P:regulation of transcription by RNA polymerase II"/>
    <property type="evidence" value="ECO:0000315"/>
    <property type="project" value="SGD"/>
</dbReference>
<dbReference type="FunFam" id="3.30.170.10:FF:000002">
    <property type="entry name" value="Cyclin-dependent kinases regulatory subunit"/>
    <property type="match status" value="1"/>
</dbReference>
<dbReference type="Gene3D" id="3.30.170.10">
    <property type="entry name" value="Cyclin-dependent kinase, regulatory subunit"/>
    <property type="match status" value="1"/>
</dbReference>
<dbReference type="InterPro" id="IPR000789">
    <property type="entry name" value="Cyclin-dep_kinase_reg-sub"/>
</dbReference>
<dbReference type="InterPro" id="IPR036858">
    <property type="entry name" value="Cyclin-dep_kinase_reg-sub_sf"/>
</dbReference>
<dbReference type="PANTHER" id="PTHR23415">
    <property type="entry name" value="CYCLIN-DEPENDENT KINASES REGULATORY SUBUNIT/60S RIBOSOME SUBUNIT BIOGENESIS PROTEIN NIP7"/>
    <property type="match status" value="1"/>
</dbReference>
<dbReference type="Pfam" id="PF01111">
    <property type="entry name" value="CKS"/>
    <property type="match status" value="1"/>
</dbReference>
<dbReference type="PRINTS" id="PR00296">
    <property type="entry name" value="CYCLINKINASE"/>
</dbReference>
<dbReference type="SMART" id="SM01084">
    <property type="entry name" value="CKS"/>
    <property type="match status" value="1"/>
</dbReference>
<dbReference type="SUPFAM" id="SSF55637">
    <property type="entry name" value="Cell cycle regulatory proteins"/>
    <property type="match status" value="1"/>
</dbReference>
<dbReference type="PROSITE" id="PS00944">
    <property type="entry name" value="CKS_1"/>
    <property type="match status" value="1"/>
</dbReference>
<dbReference type="PROSITE" id="PS00945">
    <property type="entry name" value="CKS_2"/>
    <property type="match status" value="1"/>
</dbReference>
<evidence type="ECO:0000256" key="1">
    <source>
        <dbReference type="SAM" id="MobiDB-lite"/>
    </source>
</evidence>
<evidence type="ECO:0000269" key="2">
    <source>
    </source>
</evidence>
<evidence type="ECO:0000269" key="3">
    <source>
    </source>
</evidence>
<evidence type="ECO:0000303" key="4">
    <source>
    </source>
</evidence>
<evidence type="ECO:0000305" key="5"/>
<evidence type="ECO:0000312" key="6">
    <source>
        <dbReference type="SGD" id="S000000339"/>
    </source>
</evidence>
<evidence type="ECO:0007829" key="7">
    <source>
        <dbReference type="PDB" id="3QY2"/>
    </source>
</evidence>
<feature type="chain" id="PRO_0000206245" description="Cyclin-dependent kinases regulatory subunit">
    <location>
        <begin position="1"/>
        <end position="150"/>
    </location>
</feature>
<feature type="region of interest" description="Disordered" evidence="1">
    <location>
        <begin position="115"/>
        <end position="150"/>
    </location>
</feature>
<feature type="compositionally biased region" description="Low complexity" evidence="1">
    <location>
        <begin position="115"/>
        <end position="137"/>
    </location>
</feature>
<feature type="helix" evidence="7">
    <location>
        <begin position="15"/>
        <end position="22"/>
    </location>
</feature>
<feature type="helix" evidence="7">
    <location>
        <begin position="23"/>
        <end position="27"/>
    </location>
</feature>
<feature type="strand" evidence="7">
    <location>
        <begin position="37"/>
        <end position="45"/>
    </location>
</feature>
<feature type="helix" evidence="7">
    <location>
        <begin position="48"/>
        <end position="53"/>
    </location>
</feature>
<feature type="helix" evidence="7">
    <location>
        <begin position="56"/>
        <end position="58"/>
    </location>
</feature>
<feature type="turn" evidence="7">
    <location>
        <begin position="61"/>
        <end position="63"/>
    </location>
</feature>
<feature type="strand" evidence="7">
    <location>
        <begin position="64"/>
        <end position="66"/>
    </location>
</feature>
<feature type="helix" evidence="7">
    <location>
        <begin position="71"/>
        <end position="76"/>
    </location>
</feature>
<feature type="strand" evidence="7">
    <location>
        <begin position="86"/>
        <end position="88"/>
    </location>
</feature>
<feature type="strand" evidence="7">
    <location>
        <begin position="97"/>
        <end position="103"/>
    </location>
</feature>
<feature type="turn" evidence="7">
    <location>
        <begin position="106"/>
        <end position="109"/>
    </location>
</feature>
<name>CKS1_YEAST</name>
<reference key="1">
    <citation type="journal article" date="1989" name="Mol. Cell. Biol.">
        <title>The Saccharomyces cerevisiae CKS1 gene, a homolog of the Schizosaccharomyces pombe suc1+ gene, encodes a subunit of the Cdc28 protein kinase complex.</title>
        <authorList>
            <person name="Hadwiger J.A."/>
            <person name="Wittenberg C."/>
            <person name="Mendenhall M.D."/>
            <person name="Reed S.I."/>
        </authorList>
    </citation>
    <scope>NUCLEOTIDE SEQUENCE [GENOMIC DNA]</scope>
    <scope>FUNCTION</scope>
    <scope>SUBUNIT</scope>
</reference>
<reference key="2">
    <citation type="journal article" date="1994" name="Yeast">
        <title>The sequence of 29.7 kb from the right arm of chromosome II reveals 13 complete open reading frames, of which ten correspond to new genes.</title>
        <authorList>
            <person name="Becam A.-M."/>
            <person name="Cullin C."/>
            <person name="Grzybowska E."/>
            <person name="Lacroute F."/>
            <person name="Nasr F."/>
            <person name="Ozier-Kalogeropoulos O."/>
            <person name="Palucha A."/>
            <person name="Slonimski P.P."/>
            <person name="Zagulski M."/>
            <person name="Herbert C.J."/>
        </authorList>
    </citation>
    <scope>NUCLEOTIDE SEQUENCE [GENOMIC DNA]</scope>
    <source>
        <strain>ATCC 204508 / S288c</strain>
    </source>
</reference>
<reference key="3">
    <citation type="journal article" date="1994" name="EMBO J.">
        <title>Complete DNA sequence of yeast chromosome II.</title>
        <authorList>
            <person name="Feldmann H."/>
            <person name="Aigle M."/>
            <person name="Aljinovic G."/>
            <person name="Andre B."/>
            <person name="Baclet M.C."/>
            <person name="Barthe C."/>
            <person name="Baur A."/>
            <person name="Becam A.-M."/>
            <person name="Biteau N."/>
            <person name="Boles E."/>
            <person name="Brandt T."/>
            <person name="Brendel M."/>
            <person name="Brueckner M."/>
            <person name="Bussereau F."/>
            <person name="Christiansen C."/>
            <person name="Contreras R."/>
            <person name="Crouzet M."/>
            <person name="Cziepluch C."/>
            <person name="Demolis N."/>
            <person name="Delaveau T."/>
            <person name="Doignon F."/>
            <person name="Domdey H."/>
            <person name="Duesterhus S."/>
            <person name="Dubois E."/>
            <person name="Dujon B."/>
            <person name="El Bakkoury M."/>
            <person name="Entian K.-D."/>
            <person name="Feuermann M."/>
            <person name="Fiers W."/>
            <person name="Fobo G.M."/>
            <person name="Fritz C."/>
            <person name="Gassenhuber J."/>
            <person name="Glansdorff N."/>
            <person name="Goffeau A."/>
            <person name="Grivell L.A."/>
            <person name="de Haan M."/>
            <person name="Hein C."/>
            <person name="Herbert C.J."/>
            <person name="Hollenberg C.P."/>
            <person name="Holmstroem K."/>
            <person name="Jacq C."/>
            <person name="Jacquet M."/>
            <person name="Jauniaux J.-C."/>
            <person name="Jonniaux J.-L."/>
            <person name="Kallesoee T."/>
            <person name="Kiesau P."/>
            <person name="Kirchrath L."/>
            <person name="Koetter P."/>
            <person name="Korol S."/>
            <person name="Liebl S."/>
            <person name="Logghe M."/>
            <person name="Lohan A.J.E."/>
            <person name="Louis E.J."/>
            <person name="Li Z.Y."/>
            <person name="Maat M.J."/>
            <person name="Mallet L."/>
            <person name="Mannhaupt G."/>
            <person name="Messenguy F."/>
            <person name="Miosga T."/>
            <person name="Molemans F."/>
            <person name="Mueller S."/>
            <person name="Nasr F."/>
            <person name="Obermaier B."/>
            <person name="Perea J."/>
            <person name="Pierard A."/>
            <person name="Piravandi E."/>
            <person name="Pohl F.M."/>
            <person name="Pohl T.M."/>
            <person name="Potier S."/>
            <person name="Proft M."/>
            <person name="Purnelle B."/>
            <person name="Ramezani Rad M."/>
            <person name="Rieger M."/>
            <person name="Rose M."/>
            <person name="Schaaff-Gerstenschlaeger I."/>
            <person name="Scherens B."/>
            <person name="Schwarzlose C."/>
            <person name="Skala J."/>
            <person name="Slonimski P.P."/>
            <person name="Smits P.H.M."/>
            <person name="Souciet J.-L."/>
            <person name="Steensma H.Y."/>
            <person name="Stucka R."/>
            <person name="Urrestarazu L.A."/>
            <person name="van der Aart Q.J.M."/>
            <person name="Van Dyck L."/>
            <person name="Vassarotti A."/>
            <person name="Vetter I."/>
            <person name="Vierendeels F."/>
            <person name="Vissers S."/>
            <person name="Wagner G."/>
            <person name="de Wergifosse P."/>
            <person name="Wolfe K.H."/>
            <person name="Zagulski M."/>
            <person name="Zimmermann F.K."/>
            <person name="Mewes H.-W."/>
            <person name="Kleine K."/>
        </authorList>
    </citation>
    <scope>NUCLEOTIDE SEQUENCE [LARGE SCALE GENOMIC DNA]</scope>
    <source>
        <strain>ATCC 204508 / S288c</strain>
    </source>
</reference>
<reference key="4">
    <citation type="journal article" date="2014" name="G3 (Bethesda)">
        <title>The reference genome sequence of Saccharomyces cerevisiae: Then and now.</title>
        <authorList>
            <person name="Engel S.R."/>
            <person name="Dietrich F.S."/>
            <person name="Fisk D.G."/>
            <person name="Binkley G."/>
            <person name="Balakrishnan R."/>
            <person name="Costanzo M.C."/>
            <person name="Dwight S.S."/>
            <person name="Hitz B.C."/>
            <person name="Karra K."/>
            <person name="Nash R.S."/>
            <person name="Weng S."/>
            <person name="Wong E.D."/>
            <person name="Lloyd P."/>
            <person name="Skrzypek M.S."/>
            <person name="Miyasato S.R."/>
            <person name="Simison M."/>
            <person name="Cherry J.M."/>
        </authorList>
    </citation>
    <scope>GENOME REANNOTATION</scope>
    <source>
        <strain>ATCC 204508 / S288c</strain>
    </source>
</reference>
<reference key="5">
    <citation type="journal article" date="2007" name="Genome Res.">
        <title>Approaching a complete repository of sequence-verified protein-encoding clones for Saccharomyces cerevisiae.</title>
        <authorList>
            <person name="Hu Y."/>
            <person name="Rolfs A."/>
            <person name="Bhullar B."/>
            <person name="Murthy T.V.S."/>
            <person name="Zhu C."/>
            <person name="Berger M.F."/>
            <person name="Camargo A.A."/>
            <person name="Kelley F."/>
            <person name="McCarron S."/>
            <person name="Jepson D."/>
            <person name="Richardson A."/>
            <person name="Raphael J."/>
            <person name="Moreira D."/>
            <person name="Taycher E."/>
            <person name="Zuo D."/>
            <person name="Mohr S."/>
            <person name="Kane M.F."/>
            <person name="Williamson J."/>
            <person name="Simpson A.J.G."/>
            <person name="Bulyk M.L."/>
            <person name="Harlow E."/>
            <person name="Marsischky G."/>
            <person name="Kolodner R.D."/>
            <person name="LaBaer J."/>
        </authorList>
    </citation>
    <scope>NUCLEOTIDE SEQUENCE [GENOMIC DNA]</scope>
    <source>
        <strain>ATCC 204508 / S288c</strain>
    </source>
</reference>
<reference key="6">
    <citation type="journal article" date="1994" name="Nucleic Acids Res.">
        <title>An essential gene, ESR1, is required for mitotic cell growth, DNA repair and meiotic recombination in Saccharomyces cerevisiae.</title>
        <authorList>
            <person name="Kato R."/>
            <person name="Ogawa H."/>
        </authorList>
    </citation>
    <scope>NUCLEOTIDE SEQUENCE [GENOMIC DNA] OF 32-150</scope>
</reference>
<reference key="7">
    <citation type="journal article" date="1993" name="Genes Dev.">
        <title>The Cdk-associated protein Cks1 functions both in G1 and G2 in Saccharomyces cerevisiae.</title>
        <authorList>
            <person name="Tang Y."/>
            <person name="Reed S.I."/>
        </authorList>
    </citation>
    <scope>CHARACTERIZATION</scope>
</reference>
<reference key="8">
    <citation type="journal article" date="2003" name="Nature">
        <title>Global analysis of protein expression in yeast.</title>
        <authorList>
            <person name="Ghaemmaghami S."/>
            <person name="Huh W.-K."/>
            <person name="Bower K."/>
            <person name="Howson R.W."/>
            <person name="Belle A."/>
            <person name="Dephoure N."/>
            <person name="O'Shea E.K."/>
            <person name="Weissman J.S."/>
        </authorList>
    </citation>
    <scope>LEVEL OF PROTEIN EXPRESSION [LARGE SCALE ANALYSIS]</scope>
</reference>
<reference key="9">
    <citation type="journal article" date="2000" name="Structure">
        <title>Crystal structure and mutational analysis of the Saccharomyces cerevisiae cell cycle regulatory protein Cks1: implications for domain swapping, anion binding and protein interactions.</title>
        <authorList>
            <person name="Bourne Y."/>
            <person name="Watson M.H."/>
            <person name="Arvai A.S."/>
            <person name="Bernstein S.L."/>
            <person name="Reed S.I."/>
            <person name="Tainer J.A."/>
        </authorList>
    </citation>
    <scope>X-RAY CRYSTALLOGRAPHY (3.0 ANGSTROMS)</scope>
</reference>